<sequence>MAPASLLDLVSALPATESWGPAVSDETMLDGVPFAPYSKGDKLGRMADWTEGKDRERGGRQQYGNRNYRDQQVYGANQQTNPFAIQAAEEEATFSVVDNTRTSTRTRGFGRGGGTVFGRGRGQRGGQAQRGGRGTFQRVGGRGGQQYDSRGGRGGGRGGRRFGWRDDKPQRNRDASVQVKPEWTVMEEIDFSRLGKLNLDTGDGEDLENYGFLYYYDRSYDKQPGAKTSERRLNVLERAAYNVTTSSDPILQELSDKDEATVFATDNVLSMLMCATKSVYSWDLVFSRKGNKVFIDKRDGSNLDMVTVNENAADAPLEISEGNKDSINSPGALMLEATHINNVFPLQVVSESDTNKVNMTHEHPFYNEEVETDPPASKAYRYRRFDLSLEKDDEPLHLIVRTELDAVVKNNINGEDQYLTIKALNEFDNKAQGSGGALDWRSKLASQRGAVLATEMKNNSCKLARWAVQSILAKADTMKLGFVSRTNPKNNNDHVILGVLTNKPRDFASQMALNLNNGWGIVRTIVDMVLRMDEGKYVLVKDPNKSLLRLYQVPLHTFEEEDVEDMQAPNEEDEE</sequence>
<feature type="chain" id="PRO_0000364179" description="Eukaryotic translation initiation factor 3 subunit D">
    <location>
        <begin position="1"/>
        <end position="575"/>
    </location>
</feature>
<feature type="region of interest" description="Disordered" evidence="3">
    <location>
        <begin position="36"/>
        <end position="66"/>
    </location>
</feature>
<feature type="region of interest" description="Disordered" evidence="3">
    <location>
        <begin position="103"/>
        <end position="177"/>
    </location>
</feature>
<feature type="region of interest" description="RNA gate" evidence="1">
    <location>
        <begin position="302"/>
        <end position="316"/>
    </location>
</feature>
<feature type="compositionally biased region" description="Basic and acidic residues" evidence="3">
    <location>
        <begin position="39"/>
        <end position="59"/>
    </location>
</feature>
<feature type="compositionally biased region" description="Gly residues" evidence="3">
    <location>
        <begin position="109"/>
        <end position="144"/>
    </location>
</feature>
<feature type="compositionally biased region" description="Basic and acidic residues" evidence="3">
    <location>
        <begin position="163"/>
        <end position="174"/>
    </location>
</feature>
<reference key="1">
    <citation type="journal article" date="2007" name="Plant Cell">
        <title>Dothideomycete-plant interactions illuminated by genome sequencing and EST analysis of the wheat pathogen Stagonospora nodorum.</title>
        <authorList>
            <person name="Hane J.K."/>
            <person name="Lowe R.G.T."/>
            <person name="Solomon P.S."/>
            <person name="Tan K.-C."/>
            <person name="Schoch C.L."/>
            <person name="Spatafora J.W."/>
            <person name="Crous P.W."/>
            <person name="Kodira C.D."/>
            <person name="Birren B.W."/>
            <person name="Galagan J.E."/>
            <person name="Torriani S.F.F."/>
            <person name="McDonald B.A."/>
            <person name="Oliver R.P."/>
        </authorList>
    </citation>
    <scope>NUCLEOTIDE SEQUENCE [LARGE SCALE GENOMIC DNA]</scope>
    <source>
        <strain>SN15 / ATCC MYA-4574 / FGSC 10173</strain>
    </source>
</reference>
<accession>Q0UVG7</accession>
<organism>
    <name type="scientific">Phaeosphaeria nodorum (strain SN15 / ATCC MYA-4574 / FGSC 10173)</name>
    <name type="common">Glume blotch fungus</name>
    <name type="synonym">Parastagonospora nodorum</name>
    <dbReference type="NCBI Taxonomy" id="321614"/>
    <lineage>
        <taxon>Eukaryota</taxon>
        <taxon>Fungi</taxon>
        <taxon>Dikarya</taxon>
        <taxon>Ascomycota</taxon>
        <taxon>Pezizomycotina</taxon>
        <taxon>Dothideomycetes</taxon>
        <taxon>Pleosporomycetidae</taxon>
        <taxon>Pleosporales</taxon>
        <taxon>Pleosporineae</taxon>
        <taxon>Phaeosphaeriaceae</taxon>
        <taxon>Parastagonospora</taxon>
    </lineage>
</organism>
<proteinExistence type="inferred from homology"/>
<comment type="function">
    <text evidence="2">mRNA cap-binding component of the eukaryotic translation initiation factor 3 (eIF-3) complex, which is involved in protein synthesis of a specialized repertoire of mRNAs and, together with other initiation factors, stimulates binding of mRNA and methionyl-tRNAi to the 40S ribosome. The eIF-3 complex specifically targets and initiates translation of a subset of mRNAs involved in cell proliferation. In the eIF-3 complex, eif3d specifically recognizes and binds the 7-methylguanosine cap of a subset of mRNAs.</text>
</comment>
<comment type="subunit">
    <text evidence="2">Component of the eukaryotic translation initiation factor 3 (eIF-3) complex.</text>
</comment>
<comment type="subcellular location">
    <subcellularLocation>
        <location evidence="2">Cytoplasm</location>
    </subcellularLocation>
</comment>
<comment type="domain">
    <text evidence="2">The RNA gate region regulates mRNA cap recognition to prevent promiscuous mRNA-binding before assembly of eif3d into the full eukaryotic translation initiation factor 3 (eIF-3) complex.</text>
</comment>
<comment type="similarity">
    <text evidence="2">Belongs to the eIF-3 subunit D family.</text>
</comment>
<name>EIF3D_PHANO</name>
<evidence type="ECO:0000250" key="1">
    <source>
        <dbReference type="UniProtKB" id="K7IM66"/>
    </source>
</evidence>
<evidence type="ECO:0000255" key="2">
    <source>
        <dbReference type="HAMAP-Rule" id="MF_03003"/>
    </source>
</evidence>
<evidence type="ECO:0000256" key="3">
    <source>
        <dbReference type="SAM" id="MobiDB-lite"/>
    </source>
</evidence>
<keyword id="KW-0963">Cytoplasm</keyword>
<keyword id="KW-0396">Initiation factor</keyword>
<keyword id="KW-0648">Protein biosynthesis</keyword>
<keyword id="KW-0694">RNA-binding</keyword>
<protein>
    <recommendedName>
        <fullName evidence="2">Eukaryotic translation initiation factor 3 subunit D</fullName>
        <shortName evidence="2">eIF3d</shortName>
    </recommendedName>
</protein>
<dbReference type="EMBL" id="CH445330">
    <property type="protein sequence ID" value="EAT88007.1"/>
    <property type="molecule type" value="Genomic_DNA"/>
</dbReference>
<dbReference type="RefSeq" id="XP_001794667.1">
    <property type="nucleotide sequence ID" value="XM_001794615.1"/>
</dbReference>
<dbReference type="SMR" id="Q0UVG7"/>
<dbReference type="STRING" id="321614.Q0UVG7"/>
<dbReference type="EnsemblFungi" id="SNOT_04247">
    <property type="protein sequence ID" value="SNOT_04247"/>
    <property type="gene ID" value="SNOG_04247"/>
</dbReference>
<dbReference type="GeneID" id="5971535"/>
<dbReference type="KEGG" id="pno:SNOG_04247"/>
<dbReference type="VEuPathDB" id="FungiDB:JI435_042470"/>
<dbReference type="eggNOG" id="KOG2479">
    <property type="taxonomic scope" value="Eukaryota"/>
</dbReference>
<dbReference type="HOGENOM" id="CLU_024521_2_0_1"/>
<dbReference type="InParanoid" id="Q0UVG7"/>
<dbReference type="OMA" id="FMDKRDN"/>
<dbReference type="OrthoDB" id="16538at2759"/>
<dbReference type="Proteomes" id="UP000001055">
    <property type="component" value="Unassembled WGS sequence"/>
</dbReference>
<dbReference type="GO" id="GO:0005829">
    <property type="term" value="C:cytosol"/>
    <property type="evidence" value="ECO:0007669"/>
    <property type="project" value="EnsemblFungi"/>
</dbReference>
<dbReference type="GO" id="GO:0016282">
    <property type="term" value="C:eukaryotic 43S preinitiation complex"/>
    <property type="evidence" value="ECO:0007669"/>
    <property type="project" value="UniProtKB-UniRule"/>
</dbReference>
<dbReference type="GO" id="GO:0033290">
    <property type="term" value="C:eukaryotic 48S preinitiation complex"/>
    <property type="evidence" value="ECO:0007669"/>
    <property type="project" value="UniProtKB-UniRule"/>
</dbReference>
<dbReference type="GO" id="GO:0005852">
    <property type="term" value="C:eukaryotic translation initiation factor 3 complex"/>
    <property type="evidence" value="ECO:0000318"/>
    <property type="project" value="GO_Central"/>
</dbReference>
<dbReference type="GO" id="GO:0071540">
    <property type="term" value="C:eukaryotic translation initiation factor 3 complex, eIF3e"/>
    <property type="evidence" value="ECO:0007669"/>
    <property type="project" value="EnsemblFungi"/>
</dbReference>
<dbReference type="GO" id="GO:0071541">
    <property type="term" value="C:eukaryotic translation initiation factor 3 complex, eIF3m"/>
    <property type="evidence" value="ECO:0007669"/>
    <property type="project" value="EnsemblFungi"/>
</dbReference>
<dbReference type="GO" id="GO:0098808">
    <property type="term" value="F:mRNA cap binding"/>
    <property type="evidence" value="ECO:0007669"/>
    <property type="project" value="UniProtKB-UniRule"/>
</dbReference>
<dbReference type="GO" id="GO:0003743">
    <property type="term" value="F:translation initiation factor activity"/>
    <property type="evidence" value="ECO:0000318"/>
    <property type="project" value="GO_Central"/>
</dbReference>
<dbReference type="GO" id="GO:0002191">
    <property type="term" value="P:cap-dependent translational initiation"/>
    <property type="evidence" value="ECO:0007669"/>
    <property type="project" value="UniProtKB-UniRule"/>
</dbReference>
<dbReference type="GO" id="GO:0001732">
    <property type="term" value="P:formation of cytoplasmic translation initiation complex"/>
    <property type="evidence" value="ECO:0007669"/>
    <property type="project" value="UniProtKB-UniRule"/>
</dbReference>
<dbReference type="GO" id="GO:0006413">
    <property type="term" value="P:translational initiation"/>
    <property type="evidence" value="ECO:0000318"/>
    <property type="project" value="GO_Central"/>
</dbReference>
<dbReference type="HAMAP" id="MF_03003">
    <property type="entry name" value="eIF3d"/>
    <property type="match status" value="1"/>
</dbReference>
<dbReference type="InterPro" id="IPR007783">
    <property type="entry name" value="eIF3d"/>
</dbReference>
<dbReference type="PANTHER" id="PTHR12399">
    <property type="entry name" value="EUKARYOTIC TRANSLATION INITIATION FACTOR 3 SUBUNIT 7"/>
    <property type="match status" value="1"/>
</dbReference>
<dbReference type="PANTHER" id="PTHR12399:SF0">
    <property type="entry name" value="EUKARYOTIC TRANSLATION INITIATION FACTOR 3 SUBUNIT D"/>
    <property type="match status" value="1"/>
</dbReference>
<dbReference type="Pfam" id="PF05091">
    <property type="entry name" value="eIF-3_zeta"/>
    <property type="match status" value="1"/>
</dbReference>
<dbReference type="PIRSF" id="PIRSF016281">
    <property type="entry name" value="EIF-3_zeta"/>
    <property type="match status" value="1"/>
</dbReference>
<gene>
    <name type="ORF">SNOG_04247</name>
</gene>